<reference key="1">
    <citation type="journal article" date="2007" name="PLoS Genet.">
        <title>Patterns and implications of gene gain and loss in the evolution of Prochlorococcus.</title>
        <authorList>
            <person name="Kettler G.C."/>
            <person name="Martiny A.C."/>
            <person name="Huang K."/>
            <person name="Zucker J."/>
            <person name="Coleman M.L."/>
            <person name="Rodrigue S."/>
            <person name="Chen F."/>
            <person name="Lapidus A."/>
            <person name="Ferriera S."/>
            <person name="Johnson J."/>
            <person name="Steglich C."/>
            <person name="Church G.M."/>
            <person name="Richardson P."/>
            <person name="Chisholm S.W."/>
        </authorList>
    </citation>
    <scope>NUCLEOTIDE SEQUENCE [LARGE SCALE GENOMIC DNA]</scope>
    <source>
        <strain>MIT 9301</strain>
    </source>
</reference>
<organism>
    <name type="scientific">Prochlorococcus marinus (strain MIT 9301)</name>
    <dbReference type="NCBI Taxonomy" id="167546"/>
    <lineage>
        <taxon>Bacteria</taxon>
        <taxon>Bacillati</taxon>
        <taxon>Cyanobacteriota</taxon>
        <taxon>Cyanophyceae</taxon>
        <taxon>Synechococcales</taxon>
        <taxon>Prochlorococcaceae</taxon>
        <taxon>Prochlorococcus</taxon>
    </lineage>
</organism>
<sequence>MLILASASQSRKKLLENCQIEFFQISSDFDETTIQEKNIFNLALELSFQKANSLSENIQNLSLPEELNHGPLEILGCDSIFEFKGEAYGKPSNKEEAFIRWKKMSGEFGFLHTGHTLIIGNFDSTSKIFKITEIIKKTVSSRVYFSNLEDWEIKSYVDTNEPLYCAGGFALEGIGGKYIEKIEGCFSNVMGLSLPWLRKNLYR</sequence>
<feature type="chain" id="PRO_1000060954" description="Nucleoside triphosphate pyrophosphatase">
    <location>
        <begin position="1"/>
        <end position="203"/>
    </location>
</feature>
<feature type="active site" description="Proton acceptor" evidence="1">
    <location>
        <position position="78"/>
    </location>
</feature>
<accession>A3PDZ9</accession>
<dbReference type="EC" id="3.6.1.9" evidence="1"/>
<dbReference type="EMBL" id="CP000576">
    <property type="protein sequence ID" value="ABO17974.1"/>
    <property type="molecule type" value="Genomic_DNA"/>
</dbReference>
<dbReference type="RefSeq" id="WP_011863285.1">
    <property type="nucleotide sequence ID" value="NC_009091.1"/>
</dbReference>
<dbReference type="SMR" id="A3PDZ9"/>
<dbReference type="STRING" id="167546.P9301_13511"/>
<dbReference type="KEGG" id="pmg:P9301_13511"/>
<dbReference type="eggNOG" id="COG0424">
    <property type="taxonomic scope" value="Bacteria"/>
</dbReference>
<dbReference type="HOGENOM" id="CLU_040416_1_2_3"/>
<dbReference type="OrthoDB" id="9807767at2"/>
<dbReference type="Proteomes" id="UP000001430">
    <property type="component" value="Chromosome"/>
</dbReference>
<dbReference type="GO" id="GO:0005737">
    <property type="term" value="C:cytoplasm"/>
    <property type="evidence" value="ECO:0007669"/>
    <property type="project" value="UniProtKB-SubCell"/>
</dbReference>
<dbReference type="GO" id="GO:0047429">
    <property type="term" value="F:nucleoside triphosphate diphosphatase activity"/>
    <property type="evidence" value="ECO:0007669"/>
    <property type="project" value="UniProtKB-EC"/>
</dbReference>
<dbReference type="GO" id="GO:0009117">
    <property type="term" value="P:nucleotide metabolic process"/>
    <property type="evidence" value="ECO:0007669"/>
    <property type="project" value="UniProtKB-KW"/>
</dbReference>
<dbReference type="CDD" id="cd00555">
    <property type="entry name" value="Maf"/>
    <property type="match status" value="1"/>
</dbReference>
<dbReference type="Gene3D" id="3.90.950.10">
    <property type="match status" value="1"/>
</dbReference>
<dbReference type="HAMAP" id="MF_00528">
    <property type="entry name" value="Maf"/>
    <property type="match status" value="1"/>
</dbReference>
<dbReference type="InterPro" id="IPR029001">
    <property type="entry name" value="ITPase-like_fam"/>
</dbReference>
<dbReference type="InterPro" id="IPR003697">
    <property type="entry name" value="Maf-like"/>
</dbReference>
<dbReference type="NCBIfam" id="TIGR00172">
    <property type="entry name" value="maf"/>
    <property type="match status" value="1"/>
</dbReference>
<dbReference type="PANTHER" id="PTHR43213">
    <property type="entry name" value="BIFUNCTIONAL DTTP/UTP PYROPHOSPHATASE/METHYLTRANSFERASE PROTEIN-RELATED"/>
    <property type="match status" value="1"/>
</dbReference>
<dbReference type="PANTHER" id="PTHR43213:SF5">
    <property type="entry name" value="BIFUNCTIONAL DTTP_UTP PYROPHOSPHATASE_METHYLTRANSFERASE PROTEIN-RELATED"/>
    <property type="match status" value="1"/>
</dbReference>
<dbReference type="Pfam" id="PF02545">
    <property type="entry name" value="Maf"/>
    <property type="match status" value="1"/>
</dbReference>
<dbReference type="PIRSF" id="PIRSF006305">
    <property type="entry name" value="Maf"/>
    <property type="match status" value="1"/>
</dbReference>
<dbReference type="SUPFAM" id="SSF52972">
    <property type="entry name" value="ITPase-like"/>
    <property type="match status" value="1"/>
</dbReference>
<keyword id="KW-0963">Cytoplasm</keyword>
<keyword id="KW-0378">Hydrolase</keyword>
<keyword id="KW-0546">Nucleotide metabolism</keyword>
<keyword id="KW-1185">Reference proteome</keyword>
<protein>
    <recommendedName>
        <fullName evidence="1">Nucleoside triphosphate pyrophosphatase</fullName>
        <ecNumber evidence="1">3.6.1.9</ecNumber>
    </recommendedName>
    <alternativeName>
        <fullName evidence="1">Nucleotide pyrophosphatase</fullName>
        <shortName evidence="1">Nucleotide PPase</shortName>
    </alternativeName>
</protein>
<comment type="function">
    <text evidence="1">Nucleoside triphosphate pyrophosphatase. May have a dual role in cell division arrest and in preventing the incorporation of modified nucleotides into cellular nucleic acids.</text>
</comment>
<comment type="catalytic activity">
    <reaction evidence="1">
        <text>a ribonucleoside 5'-triphosphate + H2O = a ribonucleoside 5'-phosphate + diphosphate + H(+)</text>
        <dbReference type="Rhea" id="RHEA:23996"/>
        <dbReference type="ChEBI" id="CHEBI:15377"/>
        <dbReference type="ChEBI" id="CHEBI:15378"/>
        <dbReference type="ChEBI" id="CHEBI:33019"/>
        <dbReference type="ChEBI" id="CHEBI:58043"/>
        <dbReference type="ChEBI" id="CHEBI:61557"/>
        <dbReference type="EC" id="3.6.1.9"/>
    </reaction>
</comment>
<comment type="catalytic activity">
    <reaction evidence="1">
        <text>a 2'-deoxyribonucleoside 5'-triphosphate + H2O = a 2'-deoxyribonucleoside 5'-phosphate + diphosphate + H(+)</text>
        <dbReference type="Rhea" id="RHEA:44644"/>
        <dbReference type="ChEBI" id="CHEBI:15377"/>
        <dbReference type="ChEBI" id="CHEBI:15378"/>
        <dbReference type="ChEBI" id="CHEBI:33019"/>
        <dbReference type="ChEBI" id="CHEBI:61560"/>
        <dbReference type="ChEBI" id="CHEBI:65317"/>
        <dbReference type="EC" id="3.6.1.9"/>
    </reaction>
</comment>
<comment type="cofactor">
    <cofactor evidence="1">
        <name>a divalent metal cation</name>
        <dbReference type="ChEBI" id="CHEBI:60240"/>
    </cofactor>
</comment>
<comment type="subcellular location">
    <subcellularLocation>
        <location evidence="1">Cytoplasm</location>
    </subcellularLocation>
</comment>
<comment type="similarity">
    <text evidence="1">Belongs to the Maf family.</text>
</comment>
<evidence type="ECO:0000255" key="1">
    <source>
        <dbReference type="HAMAP-Rule" id="MF_00528"/>
    </source>
</evidence>
<proteinExistence type="inferred from homology"/>
<gene>
    <name type="ordered locus">P9301_13511</name>
</gene>
<name>NTPP_PROM0</name>